<evidence type="ECO:0000250" key="1">
    <source>
        <dbReference type="UniProtKB" id="P0DKQ2"/>
    </source>
</evidence>
<evidence type="ECO:0000250" key="2">
    <source>
        <dbReference type="UniProtKB" id="Q5EHP3"/>
    </source>
</evidence>
<evidence type="ECO:0000255" key="3"/>
<evidence type="ECO:0000269" key="4">
    <source>
    </source>
</evidence>
<evidence type="ECO:0000303" key="5">
    <source>
    </source>
</evidence>
<evidence type="ECO:0000305" key="6"/>
<evidence type="ECO:0000305" key="7">
    <source>
    </source>
</evidence>
<evidence type="ECO:0000312" key="8">
    <source>
        <dbReference type="EMBL" id="AEX60311.1"/>
    </source>
</evidence>
<accession>H2BKJ0</accession>
<reference evidence="8" key="1">
    <citation type="journal article" date="2013" name="Toxicon">
        <title>Characterizing the evolution and functions of the M-superfamily conotoxins.</title>
        <authorList>
            <person name="Zhou M."/>
            <person name="Wang L."/>
            <person name="Wu Y."/>
            <person name="Zhu X."/>
            <person name="Feng Y."/>
            <person name="Chen Z."/>
            <person name="Li Y."/>
            <person name="Sun D."/>
            <person name="Ren Z."/>
            <person name="Xu A."/>
        </authorList>
    </citation>
    <scope>NUCLEOTIDE SEQUENCE [MRNA]</scope>
    <source>
        <tissue>Venom duct</tissue>
    </source>
</reference>
<reference key="2">
    <citation type="journal article" date="2022" name="Toxicon">
        <title>Synthesis and characterization of alphaM-conotoxin SIIID, a reversible human alpha7 nicotinic acetylcholine receptor antagonist.</title>
        <authorList>
            <person name="Wang H."/>
            <person name="Li Y."/>
            <person name="Yang M."/>
            <person name="Zhou M."/>
        </authorList>
    </citation>
    <scope>FUNCTION</scope>
    <scope>SYNTHESIS OF 54-74</scope>
</reference>
<comment type="function">
    <text evidence="1 4">The short synthetic peptide SIIID (range 54-74, with disulfide pairing 1-4, 2-5 and 3-6) reversibly inhibits human alpha-7/CHRNA7 acetylcholine receptor (IC(50)=880 nM) (PubMed:35255330). Shows a paralytic effect in fish (By similarity).</text>
</comment>
<comment type="subcellular location">
    <subcellularLocation>
        <location evidence="7">Secreted</location>
    </subcellularLocation>
</comment>
<comment type="tissue specificity">
    <text evidence="7">Expressed by the venom duct.</text>
</comment>
<comment type="domain">
    <text evidence="6">The cysteine framework is III (CC-C-C-CC). Classified in the M-1 branch, since 1 residue stands between the fourth and the fifth cysteine residues.</text>
</comment>
<comment type="PTM">
    <text evidence="4">Three disulfide isomers have been synthesized and tested. SIIID with the disulfide pairing 1-4;2-5;3-6 is the most active.</text>
</comment>
<comment type="miscellaneous">
    <text evidence="4">Negative results: SIIID with the disulfide pairing 1-4;2-5;3-6 shows no or very activity on sodium, potassium and calcium currents in rat DRG neurons. It does not show obvious effect on the human alpha-3-beta 4/CHRNA3-CHRNB4 nicotinic acetylcholine receptor.</text>
</comment>
<comment type="similarity">
    <text evidence="6">Belongs to the conotoxin M superfamily.</text>
</comment>
<comment type="caution">
    <text evidence="6">Wang et al (2022) synthesized and tested activity on the short peptide 54-74. By comparison with Conotoxins SIIIA and SIIIB (AC P0DKQ2, and AC P0CE77) and according to pair of basic residues, the natural peptide may be 2 residues longer at the N-terminus (52-74), and may contain a pyrrolidone carboxylic acid at its N-terminal Gln-52.</text>
</comment>
<feature type="signal peptide" evidence="3">
    <location>
        <begin position="1"/>
        <end position="20"/>
    </location>
</feature>
<feature type="propeptide" id="PRO_0000458002" evidence="7">
    <location>
        <begin position="21"/>
        <end position="53"/>
    </location>
</feature>
<feature type="peptide" id="PRO_5003560517" description="Conotoxin SIIID" evidence="7">
    <location>
        <begin position="54"/>
        <end position="74"/>
    </location>
</feature>
<feature type="disulfide bond" evidence="2">
    <location>
        <begin position="54"/>
        <end position="71"/>
    </location>
</feature>
<feature type="disulfide bond" evidence="2">
    <location>
        <begin position="55"/>
        <end position="73"/>
    </location>
</feature>
<feature type="disulfide bond" evidence="2">
    <location>
        <begin position="61"/>
        <end position="74"/>
    </location>
</feature>
<name>CM3D_CONST</name>
<sequence>MMSKLGVLLTVCLLLFPLTALPLDGDQPADQLEDRMQDDISSEQYPSFVRRQKCCGEGSSCPKYFKNNFICGCC</sequence>
<keyword id="KW-0008">Acetylcholine receptor inhibiting toxin</keyword>
<keyword id="KW-0165">Cleavage on pair of basic residues</keyword>
<keyword id="KW-1015">Disulfide bond</keyword>
<keyword id="KW-0528">Neurotoxin</keyword>
<keyword id="KW-0629">Postsynaptic neurotoxin</keyword>
<keyword id="KW-0964">Secreted</keyword>
<keyword id="KW-0732">Signal</keyword>
<keyword id="KW-0800">Toxin</keyword>
<dbReference type="EMBL" id="JF510825">
    <property type="protein sequence ID" value="AEX60311.1"/>
    <property type="molecule type" value="mRNA"/>
</dbReference>
<dbReference type="GO" id="GO:0005576">
    <property type="term" value="C:extracellular region"/>
    <property type="evidence" value="ECO:0007669"/>
    <property type="project" value="UniProtKB-SubCell"/>
</dbReference>
<dbReference type="GO" id="GO:0035792">
    <property type="term" value="C:host cell postsynaptic membrane"/>
    <property type="evidence" value="ECO:0007669"/>
    <property type="project" value="UniProtKB-KW"/>
</dbReference>
<dbReference type="GO" id="GO:0030550">
    <property type="term" value="F:acetylcholine receptor inhibitor activity"/>
    <property type="evidence" value="ECO:0007669"/>
    <property type="project" value="UniProtKB-KW"/>
</dbReference>
<dbReference type="GO" id="GO:0008200">
    <property type="term" value="F:ion channel inhibitor activity"/>
    <property type="evidence" value="ECO:0007669"/>
    <property type="project" value="InterPro"/>
</dbReference>
<dbReference type="GO" id="GO:0090729">
    <property type="term" value="F:toxin activity"/>
    <property type="evidence" value="ECO:0007669"/>
    <property type="project" value="UniProtKB-KW"/>
</dbReference>
<dbReference type="InterPro" id="IPR004214">
    <property type="entry name" value="Conotoxin"/>
</dbReference>
<dbReference type="Pfam" id="PF02950">
    <property type="entry name" value="Conotoxin"/>
    <property type="match status" value="1"/>
</dbReference>
<protein>
    <recommendedName>
        <fullName evidence="5">Conotoxin SIIID</fullName>
    </recommendedName>
    <alternativeName>
        <fullName evidence="8">S3-G02</fullName>
    </alternativeName>
</protein>
<organism>
    <name type="scientific">Conus striatus</name>
    <name type="common">Striated cone</name>
    <dbReference type="NCBI Taxonomy" id="6493"/>
    <lineage>
        <taxon>Eukaryota</taxon>
        <taxon>Metazoa</taxon>
        <taxon>Spiralia</taxon>
        <taxon>Lophotrochozoa</taxon>
        <taxon>Mollusca</taxon>
        <taxon>Gastropoda</taxon>
        <taxon>Caenogastropoda</taxon>
        <taxon>Neogastropoda</taxon>
        <taxon>Conoidea</taxon>
        <taxon>Conidae</taxon>
        <taxon>Conus</taxon>
        <taxon>Pionoconus</taxon>
    </lineage>
</organism>
<proteinExistence type="inferred from homology"/>